<name>MURG_BURM9</name>
<protein>
    <recommendedName>
        <fullName evidence="1">UDP-N-acetylglucosamine--N-acetylmuramyl-(pentapeptide) pyrophosphoryl-undecaprenol N-acetylglucosamine transferase</fullName>
        <ecNumber evidence="1">2.4.1.227</ecNumber>
    </recommendedName>
    <alternativeName>
        <fullName evidence="1">Undecaprenyl-PP-MurNAc-pentapeptide-UDPGlcNAc GlcNAc transferase</fullName>
    </alternativeName>
</protein>
<gene>
    <name evidence="1" type="primary">murG</name>
    <name type="ordered locus">BMA10229_A1331</name>
</gene>
<proteinExistence type="inferred from homology"/>
<comment type="function">
    <text evidence="1">Cell wall formation. Catalyzes the transfer of a GlcNAc subunit on undecaprenyl-pyrophosphoryl-MurNAc-pentapeptide (lipid intermediate I) to form undecaprenyl-pyrophosphoryl-MurNAc-(pentapeptide)GlcNAc (lipid intermediate II).</text>
</comment>
<comment type="catalytic activity">
    <reaction evidence="1">
        <text>di-trans,octa-cis-undecaprenyl diphospho-N-acetyl-alpha-D-muramoyl-L-alanyl-D-glutamyl-meso-2,6-diaminopimeloyl-D-alanyl-D-alanine + UDP-N-acetyl-alpha-D-glucosamine = di-trans,octa-cis-undecaprenyl diphospho-[N-acetyl-alpha-D-glucosaminyl-(1-&gt;4)]-N-acetyl-alpha-D-muramoyl-L-alanyl-D-glutamyl-meso-2,6-diaminopimeloyl-D-alanyl-D-alanine + UDP + H(+)</text>
        <dbReference type="Rhea" id="RHEA:31227"/>
        <dbReference type="ChEBI" id="CHEBI:15378"/>
        <dbReference type="ChEBI" id="CHEBI:57705"/>
        <dbReference type="ChEBI" id="CHEBI:58223"/>
        <dbReference type="ChEBI" id="CHEBI:61387"/>
        <dbReference type="ChEBI" id="CHEBI:61388"/>
        <dbReference type="EC" id="2.4.1.227"/>
    </reaction>
</comment>
<comment type="pathway">
    <text evidence="1">Cell wall biogenesis; peptidoglycan biosynthesis.</text>
</comment>
<comment type="subcellular location">
    <subcellularLocation>
        <location evidence="1">Cell inner membrane</location>
        <topology evidence="1">Peripheral membrane protein</topology>
        <orientation evidence="1">Cytoplasmic side</orientation>
    </subcellularLocation>
</comment>
<comment type="similarity">
    <text evidence="1">Belongs to the glycosyltransferase 28 family. MurG subfamily.</text>
</comment>
<organism>
    <name type="scientific">Burkholderia mallei (strain NCTC 10229)</name>
    <dbReference type="NCBI Taxonomy" id="412022"/>
    <lineage>
        <taxon>Bacteria</taxon>
        <taxon>Pseudomonadati</taxon>
        <taxon>Pseudomonadota</taxon>
        <taxon>Betaproteobacteria</taxon>
        <taxon>Burkholderiales</taxon>
        <taxon>Burkholderiaceae</taxon>
        <taxon>Burkholderia</taxon>
        <taxon>pseudomallei group</taxon>
    </lineage>
</organism>
<dbReference type="EC" id="2.4.1.227" evidence="1"/>
<dbReference type="EMBL" id="CP000546">
    <property type="protein sequence ID" value="ABN02730.1"/>
    <property type="molecule type" value="Genomic_DNA"/>
</dbReference>
<dbReference type="RefSeq" id="WP_004194182.1">
    <property type="nucleotide sequence ID" value="NC_008836.1"/>
</dbReference>
<dbReference type="SMR" id="A2S5U5"/>
<dbReference type="CAZy" id="GT28">
    <property type="family name" value="Glycosyltransferase Family 28"/>
</dbReference>
<dbReference type="GeneID" id="93061627"/>
<dbReference type="KEGG" id="bml:BMA10229_A1331"/>
<dbReference type="HOGENOM" id="CLU_037404_2_0_4"/>
<dbReference type="UniPathway" id="UPA00219"/>
<dbReference type="Proteomes" id="UP000002283">
    <property type="component" value="Chromosome I"/>
</dbReference>
<dbReference type="GO" id="GO:0005886">
    <property type="term" value="C:plasma membrane"/>
    <property type="evidence" value="ECO:0007669"/>
    <property type="project" value="UniProtKB-SubCell"/>
</dbReference>
<dbReference type="GO" id="GO:0051991">
    <property type="term" value="F:UDP-N-acetyl-D-glucosamine:N-acetylmuramoyl-L-alanyl-D-glutamyl-meso-2,6-diaminopimelyl-D-alanyl-D-alanine-diphosphoundecaprenol 4-beta-N-acetylglucosaminlytransferase activity"/>
    <property type="evidence" value="ECO:0007669"/>
    <property type="project" value="RHEA"/>
</dbReference>
<dbReference type="GO" id="GO:0050511">
    <property type="term" value="F:undecaprenyldiphospho-muramoylpentapeptide beta-N-acetylglucosaminyltransferase activity"/>
    <property type="evidence" value="ECO:0007669"/>
    <property type="project" value="UniProtKB-UniRule"/>
</dbReference>
<dbReference type="GO" id="GO:0005975">
    <property type="term" value="P:carbohydrate metabolic process"/>
    <property type="evidence" value="ECO:0007669"/>
    <property type="project" value="InterPro"/>
</dbReference>
<dbReference type="GO" id="GO:0051301">
    <property type="term" value="P:cell division"/>
    <property type="evidence" value="ECO:0007669"/>
    <property type="project" value="UniProtKB-KW"/>
</dbReference>
<dbReference type="GO" id="GO:0071555">
    <property type="term" value="P:cell wall organization"/>
    <property type="evidence" value="ECO:0007669"/>
    <property type="project" value="UniProtKB-KW"/>
</dbReference>
<dbReference type="GO" id="GO:0030259">
    <property type="term" value="P:lipid glycosylation"/>
    <property type="evidence" value="ECO:0007669"/>
    <property type="project" value="UniProtKB-UniRule"/>
</dbReference>
<dbReference type="GO" id="GO:0009252">
    <property type="term" value="P:peptidoglycan biosynthetic process"/>
    <property type="evidence" value="ECO:0007669"/>
    <property type="project" value="UniProtKB-UniRule"/>
</dbReference>
<dbReference type="GO" id="GO:0008360">
    <property type="term" value="P:regulation of cell shape"/>
    <property type="evidence" value="ECO:0007669"/>
    <property type="project" value="UniProtKB-KW"/>
</dbReference>
<dbReference type="CDD" id="cd03785">
    <property type="entry name" value="GT28_MurG"/>
    <property type="match status" value="1"/>
</dbReference>
<dbReference type="Gene3D" id="3.40.50.2000">
    <property type="entry name" value="Glycogen Phosphorylase B"/>
    <property type="match status" value="2"/>
</dbReference>
<dbReference type="HAMAP" id="MF_00033">
    <property type="entry name" value="MurG"/>
    <property type="match status" value="1"/>
</dbReference>
<dbReference type="InterPro" id="IPR006009">
    <property type="entry name" value="GlcNAc_MurG"/>
</dbReference>
<dbReference type="InterPro" id="IPR007235">
    <property type="entry name" value="Glyco_trans_28_C"/>
</dbReference>
<dbReference type="InterPro" id="IPR004276">
    <property type="entry name" value="GlycoTrans_28_N"/>
</dbReference>
<dbReference type="NCBIfam" id="TIGR01133">
    <property type="entry name" value="murG"/>
    <property type="match status" value="1"/>
</dbReference>
<dbReference type="PANTHER" id="PTHR21015:SF22">
    <property type="entry name" value="GLYCOSYLTRANSFERASE"/>
    <property type="match status" value="1"/>
</dbReference>
<dbReference type="PANTHER" id="PTHR21015">
    <property type="entry name" value="UDP-N-ACETYLGLUCOSAMINE--N-ACETYLMURAMYL-(PENTAPEPTIDE) PYROPHOSPHORYL-UNDECAPRENOL N-ACETYLGLUCOSAMINE TRANSFERASE 1"/>
    <property type="match status" value="1"/>
</dbReference>
<dbReference type="Pfam" id="PF04101">
    <property type="entry name" value="Glyco_tran_28_C"/>
    <property type="match status" value="1"/>
</dbReference>
<dbReference type="Pfam" id="PF03033">
    <property type="entry name" value="Glyco_transf_28"/>
    <property type="match status" value="1"/>
</dbReference>
<dbReference type="SUPFAM" id="SSF53756">
    <property type="entry name" value="UDP-Glycosyltransferase/glycogen phosphorylase"/>
    <property type="match status" value="1"/>
</dbReference>
<reference key="1">
    <citation type="journal article" date="2010" name="Genome Biol. Evol.">
        <title>Continuing evolution of Burkholderia mallei through genome reduction and large-scale rearrangements.</title>
        <authorList>
            <person name="Losada L."/>
            <person name="Ronning C.M."/>
            <person name="DeShazer D."/>
            <person name="Woods D."/>
            <person name="Fedorova N."/>
            <person name="Kim H.S."/>
            <person name="Shabalina S.A."/>
            <person name="Pearson T.R."/>
            <person name="Brinkac L."/>
            <person name="Tan P."/>
            <person name="Nandi T."/>
            <person name="Crabtree J."/>
            <person name="Badger J."/>
            <person name="Beckstrom-Sternberg S."/>
            <person name="Saqib M."/>
            <person name="Schutzer S.E."/>
            <person name="Keim P."/>
            <person name="Nierman W.C."/>
        </authorList>
    </citation>
    <scope>NUCLEOTIDE SEQUENCE [LARGE SCALE GENOMIC DNA]</scope>
    <source>
        <strain>NCTC 10229</strain>
    </source>
</reference>
<evidence type="ECO:0000255" key="1">
    <source>
        <dbReference type="HAMAP-Rule" id="MF_00033"/>
    </source>
</evidence>
<keyword id="KW-0131">Cell cycle</keyword>
<keyword id="KW-0132">Cell division</keyword>
<keyword id="KW-0997">Cell inner membrane</keyword>
<keyword id="KW-1003">Cell membrane</keyword>
<keyword id="KW-0133">Cell shape</keyword>
<keyword id="KW-0961">Cell wall biogenesis/degradation</keyword>
<keyword id="KW-0328">Glycosyltransferase</keyword>
<keyword id="KW-0472">Membrane</keyword>
<keyword id="KW-0573">Peptidoglycan synthesis</keyword>
<keyword id="KW-0808">Transferase</keyword>
<accession>A2S5U5</accession>
<sequence length="367" mass="38738">MTSTQRTLMVMAGGTGGHVFPGLAVAHRMQAQGWRVVWLGNPAGMEATLVPRHGIPMEYVRFGGLRGKGLATKFALPFNLLRACAQSLRALRRVKPDVVLGMGGYITFPAGLVTVLTGRPLVLHEQNSIAGLTNKVLAKLAKRVLVAFPGALPNAEWTGNPIRTELARTEPPQARYAARSGKLRLLVVGGSLGAAALNEVVPRALALLAPDERPQVVHQAGAKHIDTLKENYEAAGLSCGSDVALVPFIDDMASAYANADLVICRSGAMTVAEIAAVGVAALFVPFPHAVDDHQTTNAEFLAEQGAAVLVQQRDLSAELLADWLRGQSRDSLAAMAERSRSLAKPDATDEVARVCAAVAGANLEGKQ</sequence>
<feature type="chain" id="PRO_1000002625" description="UDP-N-acetylglucosamine--N-acetylmuramyl-(pentapeptide) pyrophosphoryl-undecaprenol N-acetylglucosamine transferase">
    <location>
        <begin position="1"/>
        <end position="367"/>
    </location>
</feature>
<feature type="binding site" evidence="1">
    <location>
        <begin position="15"/>
        <end position="17"/>
    </location>
    <ligand>
        <name>UDP-N-acetyl-alpha-D-glucosamine</name>
        <dbReference type="ChEBI" id="CHEBI:57705"/>
    </ligand>
</feature>
<feature type="binding site" evidence="1">
    <location>
        <position position="127"/>
    </location>
    <ligand>
        <name>UDP-N-acetyl-alpha-D-glucosamine</name>
        <dbReference type="ChEBI" id="CHEBI:57705"/>
    </ligand>
</feature>
<feature type="binding site" evidence="1">
    <location>
        <position position="163"/>
    </location>
    <ligand>
        <name>UDP-N-acetyl-alpha-D-glucosamine</name>
        <dbReference type="ChEBI" id="CHEBI:57705"/>
    </ligand>
</feature>
<feature type="binding site" evidence="1">
    <location>
        <position position="191"/>
    </location>
    <ligand>
        <name>UDP-N-acetyl-alpha-D-glucosamine</name>
        <dbReference type="ChEBI" id="CHEBI:57705"/>
    </ligand>
</feature>
<feature type="binding site" evidence="1">
    <location>
        <position position="249"/>
    </location>
    <ligand>
        <name>UDP-N-acetyl-alpha-D-glucosamine</name>
        <dbReference type="ChEBI" id="CHEBI:57705"/>
    </ligand>
</feature>
<feature type="binding site" evidence="1">
    <location>
        <position position="294"/>
    </location>
    <ligand>
        <name>UDP-N-acetyl-alpha-D-glucosamine</name>
        <dbReference type="ChEBI" id="CHEBI:57705"/>
    </ligand>
</feature>